<reference key="1">
    <citation type="journal article" date="2000" name="Proc. Natl. Acad. Sci. U.S.A.">
        <title>Genome sequence of Halobacterium species NRC-1.</title>
        <authorList>
            <person name="Ng W.V."/>
            <person name="Kennedy S.P."/>
            <person name="Mahairas G.G."/>
            <person name="Berquist B."/>
            <person name="Pan M."/>
            <person name="Shukla H.D."/>
            <person name="Lasky S.R."/>
            <person name="Baliga N.S."/>
            <person name="Thorsson V."/>
            <person name="Sbrogna J."/>
            <person name="Swartzell S."/>
            <person name="Weir D."/>
            <person name="Hall J."/>
            <person name="Dahl T.A."/>
            <person name="Welti R."/>
            <person name="Goo Y.A."/>
            <person name="Leithauser B."/>
            <person name="Keller K."/>
            <person name="Cruz R."/>
            <person name="Danson M.J."/>
            <person name="Hough D.W."/>
            <person name="Maddocks D.G."/>
            <person name="Jablonski P.E."/>
            <person name="Krebs M.P."/>
            <person name="Angevine C.M."/>
            <person name="Dale H."/>
            <person name="Isenbarger T.A."/>
            <person name="Peck R.F."/>
            <person name="Pohlschroder M."/>
            <person name="Spudich J.L."/>
            <person name="Jung K.-H."/>
            <person name="Alam M."/>
            <person name="Freitas T."/>
            <person name="Hou S."/>
            <person name="Daniels C.J."/>
            <person name="Dennis P.P."/>
            <person name="Omer A.D."/>
            <person name="Ebhardt H."/>
            <person name="Lowe T.M."/>
            <person name="Liang P."/>
            <person name="Riley M."/>
            <person name="Hood L."/>
            <person name="DasSarma S."/>
        </authorList>
    </citation>
    <scope>NUCLEOTIDE SEQUENCE [LARGE SCALE GENOMIC DNA]</scope>
    <source>
        <strain>ATCC 700922 / JCM 11081 / NRC-1</strain>
    </source>
</reference>
<evidence type="ECO:0000256" key="1">
    <source>
        <dbReference type="SAM" id="MobiDB-lite"/>
    </source>
</evidence>
<evidence type="ECO:0000305" key="2"/>
<organism>
    <name type="scientific">Halobacterium salinarum (strain ATCC 700922 / JCM 11081 / NRC-1)</name>
    <name type="common">Halobacterium halobium</name>
    <dbReference type="NCBI Taxonomy" id="64091"/>
    <lineage>
        <taxon>Archaea</taxon>
        <taxon>Methanobacteriati</taxon>
        <taxon>Methanobacteriota</taxon>
        <taxon>Stenosarchaea group</taxon>
        <taxon>Halobacteria</taxon>
        <taxon>Halobacteriales</taxon>
        <taxon>Halobacteriaceae</taxon>
        <taxon>Halobacterium</taxon>
        <taxon>Halobacterium salinarum NRC-34001</taxon>
    </lineage>
</organism>
<protein>
    <recommendedName>
        <fullName>UPF0148 protein VNG_2366C</fullName>
    </recommendedName>
</protein>
<proteinExistence type="inferred from homology"/>
<comment type="similarity">
    <text evidence="2">Belongs to the UPF0148 family.</text>
</comment>
<name>Y2366_HALSA</name>
<sequence>MSNTDDGFDKEAAREELREKYNADQQDREETARMSDLLLQGATMTNDHCDRCGTPLFRHDGETFCPTCQHDDNDDEPTATTQSAPDRSPPADPQATPHSSPPTTPDTSSSTAAATDDVPTAAARDRPEHAPTAEPTTPATEELESTIAALARRASDADDPRTAREYLEAAHEAAAALDTLRP</sequence>
<feature type="chain" id="PRO_0000159856" description="UPF0148 protein VNG_2366C">
    <location>
        <begin position="1"/>
        <end position="182"/>
    </location>
</feature>
<feature type="region of interest" description="Disordered" evidence="1">
    <location>
        <begin position="1"/>
        <end position="162"/>
    </location>
</feature>
<feature type="compositionally biased region" description="Basic and acidic residues" evidence="1">
    <location>
        <begin position="7"/>
        <end position="33"/>
    </location>
</feature>
<feature type="compositionally biased region" description="Basic and acidic residues" evidence="1">
    <location>
        <begin position="47"/>
        <end position="62"/>
    </location>
</feature>
<feature type="compositionally biased region" description="Low complexity" evidence="1">
    <location>
        <begin position="105"/>
        <end position="122"/>
    </location>
</feature>
<feature type="compositionally biased region" description="Basic and acidic residues" evidence="1">
    <location>
        <begin position="153"/>
        <end position="162"/>
    </location>
</feature>
<keyword id="KW-1185">Reference proteome</keyword>
<accession>Q9HMV9</accession>
<gene>
    <name type="ordered locus">VNG_2366C</name>
</gene>
<dbReference type="EMBL" id="AE004437">
    <property type="protein sequence ID" value="AAG20462.1"/>
    <property type="molecule type" value="Genomic_DNA"/>
</dbReference>
<dbReference type="PIR" id="B84387">
    <property type="entry name" value="B84387"/>
</dbReference>
<dbReference type="RefSeq" id="WP_010903764.1">
    <property type="nucleotide sequence ID" value="NC_002607.1"/>
</dbReference>
<dbReference type="SMR" id="Q9HMV9"/>
<dbReference type="STRING" id="64091.VNG_2366C"/>
<dbReference type="PaxDb" id="64091-VNG_2366C"/>
<dbReference type="KEGG" id="hal:VNG_2366C"/>
<dbReference type="PATRIC" id="fig|64091.14.peg.1830"/>
<dbReference type="HOGENOM" id="CLU_085607_0_0_2"/>
<dbReference type="InParanoid" id="Q9HMV9"/>
<dbReference type="OrthoDB" id="26305at2157"/>
<dbReference type="Proteomes" id="UP000000554">
    <property type="component" value="Chromosome"/>
</dbReference>
<dbReference type="HAMAP" id="MF_00343">
    <property type="entry name" value="UPF0148"/>
    <property type="match status" value="1"/>
</dbReference>
<dbReference type="InterPro" id="IPR009563">
    <property type="entry name" value="SSSCA1"/>
</dbReference>
<dbReference type="InterPro" id="IPR022954">
    <property type="entry name" value="UPF0148"/>
</dbReference>
<dbReference type="InterPro" id="IPR051888">
    <property type="entry name" value="UPF0148_domain"/>
</dbReference>
<dbReference type="PANTHER" id="PTHR16537:SF1">
    <property type="entry name" value="PROTEIN ZNRD2"/>
    <property type="match status" value="1"/>
</dbReference>
<dbReference type="PANTHER" id="PTHR16537">
    <property type="entry name" value="SJOEGREN SYNDROME/SCLERODERMA AUTOANTIGEN 1"/>
    <property type="match status" value="1"/>
</dbReference>
<dbReference type="Pfam" id="PF06677">
    <property type="entry name" value="Auto_anti-p27"/>
    <property type="match status" value="1"/>
</dbReference>